<comment type="function">
    <text evidence="3 4">Acts by blocking cellular apoptosis early in infection. Later, stimulates caspase-3-like protease activity and induces apoptosis, probably to favor the release of occluded virions.</text>
</comment>
<organismHost>
    <name type="scientific">Lepidoptera</name>
    <name type="common">butterflies and moths</name>
    <dbReference type="NCBI Taxonomy" id="7088"/>
</organismHost>
<accession>P41435</accession>
<dbReference type="EMBL" id="L22858">
    <property type="protein sequence ID" value="AAA66657.1"/>
    <property type="molecule type" value="Genomic_DNA"/>
</dbReference>
<dbReference type="EMBL" id="M96361">
    <property type="protein sequence ID" value="AAA66796.1"/>
    <property type="molecule type" value="Genomic_DNA"/>
</dbReference>
<dbReference type="PIR" id="D36828">
    <property type="entry name" value="D36828"/>
</dbReference>
<dbReference type="KEGG" id="vg:1403859"/>
<dbReference type="OrthoDB" id="9255at10239"/>
<dbReference type="Proteomes" id="UP000008292">
    <property type="component" value="Segment"/>
</dbReference>
<dbReference type="GO" id="GO:0008270">
    <property type="term" value="F:zinc ion binding"/>
    <property type="evidence" value="ECO:0007669"/>
    <property type="project" value="UniProtKB-KW"/>
</dbReference>
<dbReference type="GO" id="GO:0052150">
    <property type="term" value="P:symbiont-mediated perturbation of host apoptosis"/>
    <property type="evidence" value="ECO:0007669"/>
    <property type="project" value="UniProtKB-KW"/>
</dbReference>
<dbReference type="CDD" id="cd00022">
    <property type="entry name" value="BIR"/>
    <property type="match status" value="2"/>
</dbReference>
<dbReference type="CDD" id="cd16649">
    <property type="entry name" value="mRING-HC-C3HC5_CGRF1-like"/>
    <property type="match status" value="1"/>
</dbReference>
<dbReference type="Gene3D" id="1.10.1170.10">
    <property type="entry name" value="Inhibitor Of Apoptosis Protein (2mihbC-IAP-1), Chain A"/>
    <property type="match status" value="2"/>
</dbReference>
<dbReference type="Gene3D" id="3.30.40.10">
    <property type="entry name" value="Zinc/RING finger domain, C3HC4 (zinc finger)"/>
    <property type="match status" value="1"/>
</dbReference>
<dbReference type="InterPro" id="IPR001370">
    <property type="entry name" value="BIR_rpt"/>
</dbReference>
<dbReference type="InterPro" id="IPR050784">
    <property type="entry name" value="IAP"/>
</dbReference>
<dbReference type="InterPro" id="IPR001841">
    <property type="entry name" value="Znf_RING"/>
</dbReference>
<dbReference type="InterPro" id="IPR013083">
    <property type="entry name" value="Znf_RING/FYVE/PHD"/>
</dbReference>
<dbReference type="PANTHER" id="PTHR10044">
    <property type="entry name" value="INHIBITOR OF APOPTOSIS"/>
    <property type="match status" value="1"/>
</dbReference>
<dbReference type="Pfam" id="PF00653">
    <property type="entry name" value="BIR"/>
    <property type="match status" value="2"/>
</dbReference>
<dbReference type="Pfam" id="PF13920">
    <property type="entry name" value="zf-C3HC4_3"/>
    <property type="match status" value="1"/>
</dbReference>
<dbReference type="SMART" id="SM00238">
    <property type="entry name" value="BIR"/>
    <property type="match status" value="2"/>
</dbReference>
<dbReference type="SMART" id="SM00184">
    <property type="entry name" value="RING"/>
    <property type="match status" value="1"/>
</dbReference>
<dbReference type="SUPFAM" id="SSF57924">
    <property type="entry name" value="Inhibitor of apoptosis (IAP) repeat"/>
    <property type="match status" value="2"/>
</dbReference>
<dbReference type="PROSITE" id="PS01282">
    <property type="entry name" value="BIR_REPEAT_1"/>
    <property type="match status" value="2"/>
</dbReference>
<dbReference type="PROSITE" id="PS50143">
    <property type="entry name" value="BIR_REPEAT_2"/>
    <property type="match status" value="2"/>
</dbReference>
<dbReference type="PROSITE" id="PS50089">
    <property type="entry name" value="ZF_RING_2"/>
    <property type="match status" value="1"/>
</dbReference>
<feature type="chain" id="PRO_0000122369" description="Apoptosis inhibitor 1">
    <location>
        <begin position="1"/>
        <end position="286"/>
    </location>
</feature>
<feature type="repeat" description="BIR 1">
    <location>
        <begin position="29"/>
        <end position="96"/>
    </location>
</feature>
<feature type="repeat" description="BIR 2">
    <location>
        <begin position="131"/>
        <end position="199"/>
    </location>
</feature>
<feature type="zinc finger region" description="RING-type" evidence="2">
    <location>
        <begin position="238"/>
        <end position="274"/>
    </location>
</feature>
<feature type="binding site" evidence="1">
    <location>
        <position position="169"/>
    </location>
    <ligand>
        <name>Zn(2+)</name>
        <dbReference type="ChEBI" id="CHEBI:29105"/>
    </ligand>
</feature>
<feature type="binding site" evidence="1">
    <location>
        <position position="172"/>
    </location>
    <ligand>
        <name>Zn(2+)</name>
        <dbReference type="ChEBI" id="CHEBI:29105"/>
    </ligand>
</feature>
<feature type="binding site" evidence="1">
    <location>
        <position position="189"/>
    </location>
    <ligand>
        <name>Zn(2+)</name>
        <dbReference type="ChEBI" id="CHEBI:29105"/>
    </ligand>
</feature>
<feature type="binding site" evidence="1">
    <location>
        <position position="196"/>
    </location>
    <ligand>
        <name>Zn(2+)</name>
        <dbReference type="ChEBI" id="CHEBI:29105"/>
    </ligand>
</feature>
<protein>
    <recommendedName>
        <fullName>Apoptosis inhibitor 1</fullName>
    </recommendedName>
    <alternativeName>
        <fullName>IAP-1</fullName>
    </alternativeName>
</protein>
<name>IAP1_NPVAC</name>
<evidence type="ECO:0000255" key="1">
    <source>
        <dbReference type="PROSITE-ProRule" id="PRU00029"/>
    </source>
</evidence>
<evidence type="ECO:0000255" key="2">
    <source>
        <dbReference type="PROSITE-ProRule" id="PRU00175"/>
    </source>
</evidence>
<evidence type="ECO:0000269" key="3">
    <source>
    </source>
</evidence>
<evidence type="ECO:0000269" key="4">
    <source>
    </source>
</evidence>
<gene>
    <name type="primary">IAP1</name>
</gene>
<keyword id="KW-0053">Apoptosis</keyword>
<keyword id="KW-0945">Host-virus interaction</keyword>
<keyword id="KW-0479">Metal-binding</keyword>
<keyword id="KW-1119">Modulation of host cell apoptosis by virus</keyword>
<keyword id="KW-1185">Reference proteome</keyword>
<keyword id="KW-0677">Repeat</keyword>
<keyword id="KW-0862">Zinc</keyword>
<keyword id="KW-0863">Zinc-finger</keyword>
<organism>
    <name type="scientific">Autographa californica nuclear polyhedrosis virus</name>
    <name type="common">AcMNPV</name>
    <dbReference type="NCBI Taxonomy" id="46015"/>
    <lineage>
        <taxon>Viruses</taxon>
        <taxon>Viruses incertae sedis</taxon>
        <taxon>Naldaviricetes</taxon>
        <taxon>Lefavirales</taxon>
        <taxon>Baculoviridae</taxon>
        <taxon>Alphabaculovirus</taxon>
        <taxon>Alphabaculovirus aucalifornicae</taxon>
    </lineage>
</organism>
<sequence length="286" mass="33320">MNEDTPPFYFISVCDNFRDNTAEHVFDMLIERHSSFENYPIENTAFINSLIVNGFKYNQVDDHVVCEYCEAEIKNWSEDECIEYAHVTLSPYCAYANKIAERESFGDNITINAVLVKEGKPKCVYRCMSNLQSRMDTFVNFWPAALRDMITNIAEAGLFYTGRGDETVCFFCDCCVRDWHTNEDTWQRHAAENPQCYFVLSVKGKEFCQNSITVTHVDKRDDDNLNENADDIEEKYECKVCLERQRDAVLMPCRHFCVCVQCYFGLDQKCPTCRQDVTDFIKIFVV</sequence>
<proteinExistence type="predicted"/>
<reference key="1">
    <citation type="journal article" date="1994" name="Virology">
        <title>The complete DNA sequence of Autographa californica nuclear polyhedrosis virus.</title>
        <authorList>
            <person name="Ayres M.D."/>
            <person name="Howard S.C."/>
            <person name="Kuzio J."/>
            <person name="Lopez-Ferber M."/>
            <person name="Possee R.D."/>
        </authorList>
    </citation>
    <scope>NUCLEOTIDE SEQUENCE [LARGE SCALE GENOMIC DNA]</scope>
    <source>
        <strain>C6</strain>
    </source>
</reference>
<reference key="2">
    <citation type="journal article" date="1992" name="Virology">
        <title>Sequence, genomic organization of the EcoRI-A fragment of Autographa californica nuclear polyhedrosis virus, and identification of a viral-encoded protein resembling the outer capsid protein VP8 of rotavirus.</title>
        <authorList>
            <person name="Braunagel S.C."/>
            <person name="Daniel K.D."/>
            <person name="Reilly L.M."/>
            <person name="Guarino L.A."/>
            <person name="Hong T."/>
            <person name="Summers M.D."/>
        </authorList>
    </citation>
    <scope>NUCLEOTIDE SEQUENCE [GENOMIC DNA]</scope>
    <source>
        <strain>E2</strain>
    </source>
</reference>
<reference key="3">
    <citation type="journal article" date="2009" name="Sci. China, Ser. C, Life Sci.">
        <title>Functional analysis of the Autographa californica nucleopolyhedrovirus IAP1 and IAP2.</title>
        <authorList>
            <person name="Zeng X."/>
            <person name="Nan F."/>
            <person name="Liang C."/>
            <person name="Song J."/>
            <person name="Wang Q."/>
            <person name="Vlak J.M."/>
            <person name="Chen X."/>
        </authorList>
    </citation>
    <scope>FUNCTION</scope>
</reference>
<reference key="4">
    <citation type="journal article" date="2011" name="J. Gen. Virol.">
        <title>Baculovirus IAP1 induces caspase-dependent apoptosis in insect cells.</title>
        <authorList>
            <person name="Ikeda M."/>
            <person name="Yamada H."/>
            <person name="Ito H."/>
            <person name="Kobayashi M."/>
        </authorList>
    </citation>
    <scope>FUNCTION</scope>
</reference>